<protein>
    <recommendedName>
        <fullName evidence="1">HPr kinase/phosphorylase</fullName>
        <shortName evidence="1">HPrK/P</shortName>
        <ecNumber evidence="1">2.7.11.-</ecNumber>
        <ecNumber evidence="1">2.7.4.-</ecNumber>
    </recommendedName>
    <alternativeName>
        <fullName evidence="1">HPr(Ser) kinase/phosphorylase</fullName>
    </alternativeName>
</protein>
<comment type="function">
    <text evidence="1">Catalyzes the ATP- as well as the pyrophosphate-dependent phosphorylation of a specific serine residue in HPr, a phosphocarrier protein of the phosphoenolpyruvate-dependent sugar phosphotransferase system (PTS). HprK/P also catalyzes the pyrophosphate-producing, inorganic phosphate-dependent dephosphorylation (phosphorolysis) of seryl-phosphorylated HPr (P-Ser-HPr). The two antagonistic activities of HprK/P are regulated by several intracellular metabolites, which change their concentration in response to the absence or presence of rapidly metabolisable carbon sources (glucose, fructose, etc.) in the growth medium. Therefore, by controlling the phosphorylation state of HPr, HPrK/P is a sensor enzyme that plays a major role in the regulation of carbon metabolism and sugar transport: it mediates carbon catabolite repression (CCR), and regulates PTS-catalyzed carbohydrate uptake and inducer exclusion.</text>
</comment>
<comment type="catalytic activity">
    <reaction evidence="1">
        <text>[HPr protein]-L-serine + ATP = [HPr protein]-O-phospho-L-serine + ADP + H(+)</text>
        <dbReference type="Rhea" id="RHEA:46600"/>
        <dbReference type="Rhea" id="RHEA-COMP:11602"/>
        <dbReference type="Rhea" id="RHEA-COMP:11603"/>
        <dbReference type="ChEBI" id="CHEBI:15378"/>
        <dbReference type="ChEBI" id="CHEBI:29999"/>
        <dbReference type="ChEBI" id="CHEBI:30616"/>
        <dbReference type="ChEBI" id="CHEBI:83421"/>
        <dbReference type="ChEBI" id="CHEBI:456216"/>
    </reaction>
</comment>
<comment type="catalytic activity">
    <reaction evidence="1">
        <text>[HPr protein]-O-phospho-L-serine + phosphate + H(+) = [HPr protein]-L-serine + diphosphate</text>
        <dbReference type="Rhea" id="RHEA:46604"/>
        <dbReference type="Rhea" id="RHEA-COMP:11602"/>
        <dbReference type="Rhea" id="RHEA-COMP:11603"/>
        <dbReference type="ChEBI" id="CHEBI:15378"/>
        <dbReference type="ChEBI" id="CHEBI:29999"/>
        <dbReference type="ChEBI" id="CHEBI:33019"/>
        <dbReference type="ChEBI" id="CHEBI:43474"/>
        <dbReference type="ChEBI" id="CHEBI:83421"/>
    </reaction>
</comment>
<comment type="cofactor">
    <cofactor evidence="1">
        <name>Mg(2+)</name>
        <dbReference type="ChEBI" id="CHEBI:18420"/>
    </cofactor>
</comment>
<comment type="subunit">
    <text evidence="1">Homohexamer.</text>
</comment>
<comment type="domain">
    <text evidence="1">The Walker A ATP-binding motif also binds Pi and PPi.</text>
</comment>
<comment type="miscellaneous">
    <text evidence="1">Both phosphorylation and phosphorolysis are carried out by the same active site and suggest a common mechanism for both reactions.</text>
</comment>
<comment type="similarity">
    <text evidence="1">Belongs to the HPrK/P family.</text>
</comment>
<comment type="sequence caution" evidence="2">
    <conflict type="erroneous initiation">
        <sequence resource="EMBL-CDS" id="AAL00074"/>
    </conflict>
</comment>
<proteinExistence type="inferred from homology"/>
<keyword id="KW-0067">ATP-binding</keyword>
<keyword id="KW-0119">Carbohydrate metabolism</keyword>
<keyword id="KW-0418">Kinase</keyword>
<keyword id="KW-0460">Magnesium</keyword>
<keyword id="KW-0479">Metal-binding</keyword>
<keyword id="KW-0511">Multifunctional enzyme</keyword>
<keyword id="KW-0547">Nucleotide-binding</keyword>
<keyword id="KW-1185">Reference proteome</keyword>
<keyword id="KW-0723">Serine/threonine-protein kinase</keyword>
<keyword id="KW-0808">Transferase</keyword>
<gene>
    <name evidence="1" type="primary">hprK</name>
    <name type="ordered locus">spr1270</name>
</gene>
<evidence type="ECO:0000255" key="1">
    <source>
        <dbReference type="HAMAP-Rule" id="MF_01249"/>
    </source>
</evidence>
<evidence type="ECO:0000305" key="2"/>
<dbReference type="EC" id="2.7.11.-" evidence="1"/>
<dbReference type="EC" id="2.7.4.-" evidence="1"/>
<dbReference type="EMBL" id="AE007317">
    <property type="protein sequence ID" value="AAL00074.1"/>
    <property type="status" value="ALT_INIT"/>
    <property type="molecule type" value="Genomic_DNA"/>
</dbReference>
<dbReference type="PIR" id="E98030">
    <property type="entry name" value="E98030"/>
</dbReference>
<dbReference type="RefSeq" id="NP_358863.1">
    <property type="nucleotide sequence ID" value="NC_003098.1"/>
</dbReference>
<dbReference type="SMR" id="Q8DPA2"/>
<dbReference type="STRING" id="171101.spr1270"/>
<dbReference type="KEGG" id="spr:spr1270"/>
<dbReference type="PATRIC" id="fig|171101.6.peg.1377"/>
<dbReference type="eggNOG" id="COG1493">
    <property type="taxonomic scope" value="Bacteria"/>
</dbReference>
<dbReference type="HOGENOM" id="CLU_052030_0_1_9"/>
<dbReference type="Proteomes" id="UP000000586">
    <property type="component" value="Chromosome"/>
</dbReference>
<dbReference type="GO" id="GO:0005829">
    <property type="term" value="C:cytosol"/>
    <property type="evidence" value="ECO:0000318"/>
    <property type="project" value="GO_Central"/>
</dbReference>
<dbReference type="GO" id="GO:0005524">
    <property type="term" value="F:ATP binding"/>
    <property type="evidence" value="ECO:0007669"/>
    <property type="project" value="UniProtKB-UniRule"/>
</dbReference>
<dbReference type="GO" id="GO:0000287">
    <property type="term" value="F:magnesium ion binding"/>
    <property type="evidence" value="ECO:0007669"/>
    <property type="project" value="UniProtKB-UniRule"/>
</dbReference>
<dbReference type="GO" id="GO:0000155">
    <property type="term" value="F:phosphorelay sensor kinase activity"/>
    <property type="evidence" value="ECO:0007669"/>
    <property type="project" value="InterPro"/>
</dbReference>
<dbReference type="GO" id="GO:0004674">
    <property type="term" value="F:protein serine/threonine kinase activity"/>
    <property type="evidence" value="ECO:0007669"/>
    <property type="project" value="UniProtKB-KW"/>
</dbReference>
<dbReference type="GO" id="GO:0004712">
    <property type="term" value="F:protein serine/threonine/tyrosine kinase activity"/>
    <property type="evidence" value="ECO:0007669"/>
    <property type="project" value="UniProtKB-UniRule"/>
</dbReference>
<dbReference type="GO" id="GO:0006109">
    <property type="term" value="P:regulation of carbohydrate metabolic process"/>
    <property type="evidence" value="ECO:0007669"/>
    <property type="project" value="UniProtKB-UniRule"/>
</dbReference>
<dbReference type="CDD" id="cd01918">
    <property type="entry name" value="HprK_C"/>
    <property type="match status" value="1"/>
</dbReference>
<dbReference type="FunFam" id="3.40.50.300:FF:000174">
    <property type="entry name" value="HPr kinase/phosphorylase"/>
    <property type="match status" value="1"/>
</dbReference>
<dbReference type="Gene3D" id="3.40.1390.20">
    <property type="entry name" value="HprK N-terminal domain-like"/>
    <property type="match status" value="1"/>
</dbReference>
<dbReference type="Gene3D" id="3.40.50.300">
    <property type="entry name" value="P-loop containing nucleotide triphosphate hydrolases"/>
    <property type="match status" value="1"/>
</dbReference>
<dbReference type="HAMAP" id="MF_01249">
    <property type="entry name" value="HPr_kinase"/>
    <property type="match status" value="1"/>
</dbReference>
<dbReference type="InterPro" id="IPR003755">
    <property type="entry name" value="HPr(Ser)_kin/Pase"/>
</dbReference>
<dbReference type="InterPro" id="IPR011104">
    <property type="entry name" value="Hpr_kin/Pase_C"/>
</dbReference>
<dbReference type="InterPro" id="IPR011126">
    <property type="entry name" value="Hpr_kin/Pase_Hpr_N"/>
</dbReference>
<dbReference type="InterPro" id="IPR027417">
    <property type="entry name" value="P-loop_NTPase"/>
</dbReference>
<dbReference type="InterPro" id="IPR028979">
    <property type="entry name" value="Ser_kin/Pase_Hpr-like_N_sf"/>
</dbReference>
<dbReference type="NCBIfam" id="TIGR00679">
    <property type="entry name" value="hpr-ser"/>
    <property type="match status" value="1"/>
</dbReference>
<dbReference type="PANTHER" id="PTHR30305:SF1">
    <property type="entry name" value="HPR KINASE_PHOSPHORYLASE"/>
    <property type="match status" value="1"/>
</dbReference>
<dbReference type="PANTHER" id="PTHR30305">
    <property type="entry name" value="PROTEIN YJDM-RELATED"/>
    <property type="match status" value="1"/>
</dbReference>
<dbReference type="Pfam" id="PF07475">
    <property type="entry name" value="Hpr_kinase_C"/>
    <property type="match status" value="1"/>
</dbReference>
<dbReference type="Pfam" id="PF02603">
    <property type="entry name" value="Hpr_kinase_N"/>
    <property type="match status" value="1"/>
</dbReference>
<dbReference type="SUPFAM" id="SSF75138">
    <property type="entry name" value="HprK N-terminal domain-like"/>
    <property type="match status" value="1"/>
</dbReference>
<dbReference type="SUPFAM" id="SSF53795">
    <property type="entry name" value="PEP carboxykinase-like"/>
    <property type="match status" value="1"/>
</dbReference>
<feature type="chain" id="PRO_0000058997" description="HPr kinase/phosphorylase">
    <location>
        <begin position="1"/>
        <end position="312"/>
    </location>
</feature>
<feature type="region of interest" description="Important for the catalytic mechanism of both phosphorylation and dephosphorylation" evidence="1">
    <location>
        <begin position="202"/>
        <end position="211"/>
    </location>
</feature>
<feature type="region of interest" description="Important for the catalytic mechanism of dephosphorylation" evidence="1">
    <location>
        <begin position="265"/>
        <end position="270"/>
    </location>
</feature>
<feature type="active site" evidence="1">
    <location>
        <position position="139"/>
    </location>
</feature>
<feature type="active site" evidence="1">
    <location>
        <position position="160"/>
    </location>
</feature>
<feature type="active site" description="Proton acceptor; for phosphorylation activity. Proton donor; for dephosphorylation activity" evidence="1">
    <location>
        <position position="178"/>
    </location>
</feature>
<feature type="active site" evidence="1">
    <location>
        <position position="244"/>
    </location>
</feature>
<feature type="binding site" evidence="1">
    <location>
        <begin position="154"/>
        <end position="161"/>
    </location>
    <ligand>
        <name>ATP</name>
        <dbReference type="ChEBI" id="CHEBI:30616"/>
    </ligand>
</feature>
<feature type="binding site" evidence="1">
    <location>
        <position position="161"/>
    </location>
    <ligand>
        <name>Mg(2+)</name>
        <dbReference type="ChEBI" id="CHEBI:18420"/>
    </ligand>
</feature>
<feature type="binding site" evidence="1">
    <location>
        <position position="203"/>
    </location>
    <ligand>
        <name>Mg(2+)</name>
        <dbReference type="ChEBI" id="CHEBI:18420"/>
    </ligand>
</feature>
<organism>
    <name type="scientific">Streptococcus pneumoniae (strain ATCC BAA-255 / R6)</name>
    <dbReference type="NCBI Taxonomy" id="171101"/>
    <lineage>
        <taxon>Bacteria</taxon>
        <taxon>Bacillati</taxon>
        <taxon>Bacillota</taxon>
        <taxon>Bacilli</taxon>
        <taxon>Lactobacillales</taxon>
        <taxon>Streptococcaceae</taxon>
        <taxon>Streptococcus</taxon>
    </lineage>
</organism>
<sequence length="312" mass="34870">MMSVLVKEVIEKLRLDIVYGEPELLEKEINIADITRPGLEMTGYFDYYTPERIQLLGMKEWSYLISMPSNSRYEVLKKMFLPETPAVIVARGLVVPEEMLKAARECKIAILTSRAATSRLSGELSSYLDSRLAERTSVHGVLMDIYGMGVLIQGDSGIGKSETGLELVKRGHRLVADDRVDIFAKDEITLWGEPAEILKHLIEIRGVGIIDVMSLYGASAVKDSSQVQLAVYLENYDTHKTFDRLGNNAEELEVSGVAIPRIRIPVKTGRNISVVIEAAAMNYRAKEMGFDATRLFDERLTSLIARNEVQNA</sequence>
<name>HPRK_STRR6</name>
<accession>Q8DPA2</accession>
<reference key="1">
    <citation type="journal article" date="2001" name="J. Bacteriol.">
        <title>Genome of the bacterium Streptococcus pneumoniae strain R6.</title>
        <authorList>
            <person name="Hoskins J."/>
            <person name="Alborn W.E. Jr."/>
            <person name="Arnold J."/>
            <person name="Blaszczak L.C."/>
            <person name="Burgett S."/>
            <person name="DeHoff B.S."/>
            <person name="Estrem S.T."/>
            <person name="Fritz L."/>
            <person name="Fu D.-J."/>
            <person name="Fuller W."/>
            <person name="Geringer C."/>
            <person name="Gilmour R."/>
            <person name="Glass J.S."/>
            <person name="Khoja H."/>
            <person name="Kraft A.R."/>
            <person name="Lagace R.E."/>
            <person name="LeBlanc D.J."/>
            <person name="Lee L.N."/>
            <person name="Lefkowitz E.J."/>
            <person name="Lu J."/>
            <person name="Matsushima P."/>
            <person name="McAhren S.M."/>
            <person name="McHenney M."/>
            <person name="McLeaster K."/>
            <person name="Mundy C.W."/>
            <person name="Nicas T.I."/>
            <person name="Norris F.H."/>
            <person name="O'Gara M."/>
            <person name="Peery R.B."/>
            <person name="Robertson G.T."/>
            <person name="Rockey P."/>
            <person name="Sun P.-M."/>
            <person name="Winkler M.E."/>
            <person name="Yang Y."/>
            <person name="Young-Bellido M."/>
            <person name="Zhao G."/>
            <person name="Zook C.A."/>
            <person name="Baltz R.H."/>
            <person name="Jaskunas S.R."/>
            <person name="Rosteck P.R. Jr."/>
            <person name="Skatrud P.L."/>
            <person name="Glass J.I."/>
        </authorList>
    </citation>
    <scope>NUCLEOTIDE SEQUENCE [LARGE SCALE GENOMIC DNA]</scope>
    <source>
        <strain>ATCC BAA-255 / R6</strain>
    </source>
</reference>